<name>NDUA5_SOLTU</name>
<proteinExistence type="evidence at protein level"/>
<sequence length="37" mass="4074">AKVKETTGIVGLXVVPNAREVLINLYRKTLEEIKAVP</sequence>
<comment type="function">
    <text evidence="1">Accessory subunit of the mitochondrial membrane respiratory chain NADH dehydrogenase (Complex I), that is believed not to be involved in catalysis. Complex I functions in the transfer of electrons from NADH to the respiratory chain. The immediate electron acceptor for the enzyme is believed to be ubiquinone (By similarity).</text>
</comment>
<comment type="subunit">
    <text evidence="1">Complex I is composed of about 45 different subunits.</text>
</comment>
<comment type="subcellular location">
    <subcellularLocation>
        <location>Mitochondrion inner membrane</location>
        <topology>Peripheral membrane protein</topology>
        <orientation>Matrix side</orientation>
    </subcellularLocation>
</comment>
<comment type="similarity">
    <text evidence="2">Belongs to the complex I NDUFA5 subunit family.</text>
</comment>
<feature type="chain" id="PRO_0000118635" description="NADH dehydrogenase [ubiquinone] 1 alpha subcomplex subunit 5">
    <location>
        <begin position="1"/>
        <end position="37" status="greater than"/>
    </location>
</feature>
<feature type="non-terminal residue">
    <location>
        <position position="37"/>
    </location>
</feature>
<protein>
    <recommendedName>
        <fullName>NADH dehydrogenase [ubiquinone] 1 alpha subcomplex subunit 5</fullName>
    </recommendedName>
    <alternativeName>
        <fullName>Complex I-22.5kD</fullName>
        <shortName>CI-22.5kD</shortName>
    </alternativeName>
    <alternativeName>
        <fullName>NADH-ubiquinone oxidoreductase 22.5 kDa subunit</fullName>
    </alternativeName>
</protein>
<accession>P80266</accession>
<reference key="1">
    <citation type="journal article" date="1994" name="J. Biol. Chem.">
        <title>Purification of the NADH:ubiquinone oxidoreductase (complex I) of the respiratory chain from the inner mitochondrial membrane of Solanum tuberosum.</title>
        <authorList>
            <person name="Herz U."/>
            <person name="Schroeder W."/>
            <person name="Liddell A."/>
            <person name="Leaver C.J."/>
            <person name="Brennicke A."/>
            <person name="Grohmann L."/>
        </authorList>
    </citation>
    <scope>PROTEIN SEQUENCE</scope>
    <source>
        <strain>cv. Bintje</strain>
        <tissue>Tuber</tissue>
    </source>
</reference>
<keyword id="KW-0903">Direct protein sequencing</keyword>
<keyword id="KW-0249">Electron transport</keyword>
<keyword id="KW-0472">Membrane</keyword>
<keyword id="KW-0496">Mitochondrion</keyword>
<keyword id="KW-0999">Mitochondrion inner membrane</keyword>
<keyword id="KW-1185">Reference proteome</keyword>
<keyword id="KW-0679">Respiratory chain</keyword>
<keyword id="KW-0813">Transport</keyword>
<evidence type="ECO:0000250" key="1"/>
<evidence type="ECO:0000305" key="2"/>
<dbReference type="PIR" id="F49732">
    <property type="entry name" value="F49732"/>
</dbReference>
<dbReference type="STRING" id="4113.P80266"/>
<dbReference type="PaxDb" id="4113-PGSC0003DMT400074367"/>
<dbReference type="eggNOG" id="KOG3365">
    <property type="taxonomic scope" value="Eukaryota"/>
</dbReference>
<dbReference type="InParanoid" id="P80266"/>
<dbReference type="Proteomes" id="UP000011115">
    <property type="component" value="Unassembled WGS sequence"/>
</dbReference>
<dbReference type="GO" id="GO:0005743">
    <property type="term" value="C:mitochondrial inner membrane"/>
    <property type="evidence" value="ECO:0007669"/>
    <property type="project" value="UniProtKB-SubCell"/>
</dbReference>
<dbReference type="GO" id="GO:0022904">
    <property type="term" value="P:respiratory electron transport chain"/>
    <property type="evidence" value="ECO:0007669"/>
    <property type="project" value="InterPro"/>
</dbReference>
<dbReference type="InterPro" id="IPR006806">
    <property type="entry name" value="NDUFA5"/>
</dbReference>
<dbReference type="PANTHER" id="PTHR12653:SF0">
    <property type="entry name" value="NADH DEHYDROGENASE [UBIQUINONE] 1 ALPHA SUBCOMPLEX SUBUNIT 5"/>
    <property type="match status" value="1"/>
</dbReference>
<dbReference type="PANTHER" id="PTHR12653">
    <property type="entry name" value="NADH-UBIQUINONE OXIDOREDUCTASE 13 KD-B SUBUNIT"/>
    <property type="match status" value="1"/>
</dbReference>
<dbReference type="Pfam" id="PF04716">
    <property type="entry name" value="ETC_C1_NDUFA5"/>
    <property type="match status" value="1"/>
</dbReference>
<organism>
    <name type="scientific">Solanum tuberosum</name>
    <name type="common">Potato</name>
    <dbReference type="NCBI Taxonomy" id="4113"/>
    <lineage>
        <taxon>Eukaryota</taxon>
        <taxon>Viridiplantae</taxon>
        <taxon>Streptophyta</taxon>
        <taxon>Embryophyta</taxon>
        <taxon>Tracheophyta</taxon>
        <taxon>Spermatophyta</taxon>
        <taxon>Magnoliopsida</taxon>
        <taxon>eudicotyledons</taxon>
        <taxon>Gunneridae</taxon>
        <taxon>Pentapetalae</taxon>
        <taxon>asterids</taxon>
        <taxon>lamiids</taxon>
        <taxon>Solanales</taxon>
        <taxon>Solanaceae</taxon>
        <taxon>Solanoideae</taxon>
        <taxon>Solaneae</taxon>
        <taxon>Solanum</taxon>
    </lineage>
</organism>